<proteinExistence type="inferred from homology"/>
<feature type="chain" id="PRO_0000120455" description="Glutamate-1-semialdehyde 2,1-aminomutase 2">
    <location>
        <begin position="1"/>
        <end position="429"/>
    </location>
</feature>
<feature type="modified residue" description="N6-(pyridoxal phosphate)lysine" evidence="1">
    <location>
        <position position="268"/>
    </location>
</feature>
<sequence length="429" mass="47056">MKFTESERLQQLSNEYILGGVNSPSRSYKAVGGGAPVVMKEGHGAYLYDVDGNKYIDYLQAYGPIITGHAHPHITEAIQDQAAKGVLYGTPTELEINFSKKLREAVPSLEKIRFVNSGTEAVMTTIRVARAYTKRNKIIKFAGSYHGHSDLVLVAAGSGPSQLGSPDSAGVPQSVAQEVITVPFNDIESYREAIDYWKDDIAAVLVEPIVGNFGMVMPQPGFLEEVNKISHDNGTLVIYDEVITAFRFHYGAAQDLLGVKPDLTAFGKIVGGGLPIGGYGGRQDIMEHVAPLGPAYQAGTMAGNPLSMRAGIALLEVLEQEGVYDKLDQLGRRLEEGLQKLIDKHHITATINRIYGSLTLYFTNEKVTHYEQVENSDGDAFAQFFKLMLNQGINLAPSKFEAWFLTTEHTEEDIDRTLEAADYAFSKMK</sequence>
<protein>
    <recommendedName>
        <fullName evidence="1">Glutamate-1-semialdehyde 2,1-aminomutase 2</fullName>
        <shortName evidence="1">GSA 2</shortName>
        <ecNumber evidence="1">5.4.3.8</ecNumber>
    </recommendedName>
    <alternativeName>
        <fullName evidence="1">Glutamate-1-semialdehyde aminotransferase 2</fullName>
        <shortName evidence="1">GSA-AT 2</shortName>
    </alternativeName>
</protein>
<accession>Q8CRW7</accession>
<reference key="1">
    <citation type="journal article" date="2003" name="Mol. Microbiol.">
        <title>Genome-based analysis of virulence genes in a non-biofilm-forming Staphylococcus epidermidis strain (ATCC 12228).</title>
        <authorList>
            <person name="Zhang Y.-Q."/>
            <person name="Ren S.-X."/>
            <person name="Li H.-L."/>
            <person name="Wang Y.-X."/>
            <person name="Fu G."/>
            <person name="Yang J."/>
            <person name="Qin Z.-Q."/>
            <person name="Miao Y.-G."/>
            <person name="Wang W.-Y."/>
            <person name="Chen R.-S."/>
            <person name="Shen Y."/>
            <person name="Chen Z."/>
            <person name="Yuan Z.-H."/>
            <person name="Zhao G.-P."/>
            <person name="Qu D."/>
            <person name="Danchin A."/>
            <person name="Wen Y.-M."/>
        </authorList>
    </citation>
    <scope>NUCLEOTIDE SEQUENCE [LARGE SCALE GENOMIC DNA]</scope>
    <source>
        <strain>ATCC 12228 / FDA PCI 1200</strain>
    </source>
</reference>
<dbReference type="EC" id="5.4.3.8" evidence="1"/>
<dbReference type="EMBL" id="AE015929">
    <property type="protein sequence ID" value="AAO05147.1"/>
    <property type="molecule type" value="Genomic_DNA"/>
</dbReference>
<dbReference type="RefSeq" id="NP_765103.1">
    <property type="nucleotide sequence ID" value="NC_004461.1"/>
</dbReference>
<dbReference type="RefSeq" id="WP_001830429.1">
    <property type="nucleotide sequence ID" value="NZ_WBME01000089.1"/>
</dbReference>
<dbReference type="SMR" id="Q8CRW7"/>
<dbReference type="KEGG" id="sep:SE_1548"/>
<dbReference type="PATRIC" id="fig|176280.10.peg.1513"/>
<dbReference type="eggNOG" id="COG0001">
    <property type="taxonomic scope" value="Bacteria"/>
</dbReference>
<dbReference type="HOGENOM" id="CLU_016922_1_5_9"/>
<dbReference type="OrthoDB" id="9807885at2"/>
<dbReference type="UniPathway" id="UPA00251">
    <property type="reaction ID" value="UER00317"/>
</dbReference>
<dbReference type="Proteomes" id="UP000001411">
    <property type="component" value="Chromosome"/>
</dbReference>
<dbReference type="GO" id="GO:0005737">
    <property type="term" value="C:cytoplasm"/>
    <property type="evidence" value="ECO:0007669"/>
    <property type="project" value="UniProtKB-SubCell"/>
</dbReference>
<dbReference type="GO" id="GO:0042286">
    <property type="term" value="F:glutamate-1-semialdehyde 2,1-aminomutase activity"/>
    <property type="evidence" value="ECO:0007669"/>
    <property type="project" value="UniProtKB-UniRule"/>
</dbReference>
<dbReference type="GO" id="GO:0030170">
    <property type="term" value="F:pyridoxal phosphate binding"/>
    <property type="evidence" value="ECO:0007669"/>
    <property type="project" value="InterPro"/>
</dbReference>
<dbReference type="GO" id="GO:0008483">
    <property type="term" value="F:transaminase activity"/>
    <property type="evidence" value="ECO:0007669"/>
    <property type="project" value="InterPro"/>
</dbReference>
<dbReference type="GO" id="GO:0006782">
    <property type="term" value="P:protoporphyrinogen IX biosynthetic process"/>
    <property type="evidence" value="ECO:0007669"/>
    <property type="project" value="UniProtKB-UniRule"/>
</dbReference>
<dbReference type="CDD" id="cd00610">
    <property type="entry name" value="OAT_like"/>
    <property type="match status" value="1"/>
</dbReference>
<dbReference type="FunFam" id="3.40.640.10:FF:000021">
    <property type="entry name" value="Glutamate-1-semialdehyde 2,1-aminomutase"/>
    <property type="match status" value="1"/>
</dbReference>
<dbReference type="Gene3D" id="3.90.1150.10">
    <property type="entry name" value="Aspartate Aminotransferase, domain 1"/>
    <property type="match status" value="1"/>
</dbReference>
<dbReference type="Gene3D" id="3.40.640.10">
    <property type="entry name" value="Type I PLP-dependent aspartate aminotransferase-like (Major domain)"/>
    <property type="match status" value="1"/>
</dbReference>
<dbReference type="HAMAP" id="MF_00375">
    <property type="entry name" value="HemL_aminotrans_3"/>
    <property type="match status" value="1"/>
</dbReference>
<dbReference type="InterPro" id="IPR004639">
    <property type="entry name" value="4pyrrol_synth_GluAld_NH2Trfase"/>
</dbReference>
<dbReference type="InterPro" id="IPR005814">
    <property type="entry name" value="Aminotrans_3"/>
</dbReference>
<dbReference type="InterPro" id="IPR049704">
    <property type="entry name" value="Aminotrans_3_PPA_site"/>
</dbReference>
<dbReference type="InterPro" id="IPR015424">
    <property type="entry name" value="PyrdxlP-dep_Trfase"/>
</dbReference>
<dbReference type="InterPro" id="IPR015421">
    <property type="entry name" value="PyrdxlP-dep_Trfase_major"/>
</dbReference>
<dbReference type="InterPro" id="IPR015422">
    <property type="entry name" value="PyrdxlP-dep_Trfase_small"/>
</dbReference>
<dbReference type="NCBIfam" id="TIGR00713">
    <property type="entry name" value="hemL"/>
    <property type="match status" value="1"/>
</dbReference>
<dbReference type="NCBIfam" id="NF000818">
    <property type="entry name" value="PRK00062.1"/>
    <property type="match status" value="1"/>
</dbReference>
<dbReference type="NCBIfam" id="NF009055">
    <property type="entry name" value="PRK12389.1"/>
    <property type="match status" value="1"/>
</dbReference>
<dbReference type="PANTHER" id="PTHR43713">
    <property type="entry name" value="GLUTAMATE-1-SEMIALDEHYDE 2,1-AMINOMUTASE"/>
    <property type="match status" value="1"/>
</dbReference>
<dbReference type="PANTHER" id="PTHR43713:SF1">
    <property type="entry name" value="GLUTAMATE-1-SEMIALDEHYDE 2,1-AMINOMUTASE 2"/>
    <property type="match status" value="1"/>
</dbReference>
<dbReference type="Pfam" id="PF00202">
    <property type="entry name" value="Aminotran_3"/>
    <property type="match status" value="1"/>
</dbReference>
<dbReference type="SUPFAM" id="SSF53383">
    <property type="entry name" value="PLP-dependent transferases"/>
    <property type="match status" value="1"/>
</dbReference>
<dbReference type="PROSITE" id="PS00600">
    <property type="entry name" value="AA_TRANSFER_CLASS_3"/>
    <property type="match status" value="1"/>
</dbReference>
<name>GSA2_STAES</name>
<comment type="catalytic activity">
    <reaction evidence="1">
        <text>(S)-4-amino-5-oxopentanoate = 5-aminolevulinate</text>
        <dbReference type="Rhea" id="RHEA:14265"/>
        <dbReference type="ChEBI" id="CHEBI:57501"/>
        <dbReference type="ChEBI" id="CHEBI:356416"/>
        <dbReference type="EC" id="5.4.3.8"/>
    </reaction>
</comment>
<comment type="cofactor">
    <cofactor evidence="1">
        <name>pyridoxal 5'-phosphate</name>
        <dbReference type="ChEBI" id="CHEBI:597326"/>
    </cofactor>
</comment>
<comment type="pathway">
    <text evidence="1">Porphyrin-containing compound metabolism; protoporphyrin-IX biosynthesis; 5-aminolevulinate from L-glutamyl-tRNA(Glu): step 2/2.</text>
</comment>
<comment type="subunit">
    <text evidence="1">Homodimer.</text>
</comment>
<comment type="subcellular location">
    <subcellularLocation>
        <location evidence="1">Cytoplasm</location>
    </subcellularLocation>
</comment>
<comment type="similarity">
    <text evidence="1">Belongs to the class-III pyridoxal-phosphate-dependent aminotransferase family. HemL subfamily.</text>
</comment>
<keyword id="KW-0963">Cytoplasm</keyword>
<keyword id="KW-0413">Isomerase</keyword>
<keyword id="KW-0627">Porphyrin biosynthesis</keyword>
<keyword id="KW-0663">Pyridoxal phosphate</keyword>
<organism>
    <name type="scientific">Staphylococcus epidermidis (strain ATCC 12228 / FDA PCI 1200)</name>
    <dbReference type="NCBI Taxonomy" id="176280"/>
    <lineage>
        <taxon>Bacteria</taxon>
        <taxon>Bacillati</taxon>
        <taxon>Bacillota</taxon>
        <taxon>Bacilli</taxon>
        <taxon>Bacillales</taxon>
        <taxon>Staphylococcaceae</taxon>
        <taxon>Staphylococcus</taxon>
    </lineage>
</organism>
<evidence type="ECO:0000255" key="1">
    <source>
        <dbReference type="HAMAP-Rule" id="MF_00375"/>
    </source>
</evidence>
<gene>
    <name evidence="1" type="primary">hemL2</name>
    <name type="synonym">gsaB</name>
    <name type="ordered locus">SE_1548</name>
</gene>